<keyword id="KW-1003">Cell membrane</keyword>
<keyword id="KW-0472">Membrane</keyword>
<keyword id="KW-0520">NAD</keyword>
<keyword id="KW-0874">Quinone</keyword>
<keyword id="KW-1185">Reference proteome</keyword>
<keyword id="KW-1278">Translocase</keyword>
<keyword id="KW-0812">Transmembrane</keyword>
<keyword id="KW-1133">Transmembrane helix</keyword>
<keyword id="KW-0813">Transport</keyword>
<comment type="function">
    <text evidence="1">NDH-1 shuttles electrons from NADH, via FMN and iron-sulfur (Fe-S) centers, to quinones in the respiratory chain. The immediate electron acceptor for the enzyme in this species is believed to be a menaquinone. Couples the redox reaction to proton translocation (for every two electrons transferred, four hydrogen ions are translocated across the cytoplasmic membrane), and thus conserves the redox energy in a proton gradient.</text>
</comment>
<comment type="catalytic activity">
    <reaction evidence="1">
        <text>a quinone + NADH + 5 H(+)(in) = a quinol + NAD(+) + 4 H(+)(out)</text>
        <dbReference type="Rhea" id="RHEA:57888"/>
        <dbReference type="ChEBI" id="CHEBI:15378"/>
        <dbReference type="ChEBI" id="CHEBI:24646"/>
        <dbReference type="ChEBI" id="CHEBI:57540"/>
        <dbReference type="ChEBI" id="CHEBI:57945"/>
        <dbReference type="ChEBI" id="CHEBI:132124"/>
    </reaction>
</comment>
<comment type="subunit">
    <text evidence="1">NDH-1 is composed of 14 different subunits. Subunits NuoA, H, J, K, L, M, N constitute the membrane sector of the complex.</text>
</comment>
<comment type="subcellular location">
    <subcellularLocation>
        <location evidence="1">Cell membrane</location>
        <topology evidence="1">Multi-pass membrane protein</topology>
    </subcellularLocation>
</comment>
<comment type="similarity">
    <text evidence="1">Belongs to the complex I subunit 2 family.</text>
</comment>
<gene>
    <name evidence="1" type="primary">nuoN</name>
    <name type="ordered locus">Rv3158</name>
    <name type="ORF">MTV014.02c</name>
</gene>
<accession>P9WIW9</accession>
<accession>L0TER2</accession>
<accession>O53308</accession>
<accession>P0A5M0</accession>
<proteinExistence type="evidence at protein level"/>
<dbReference type="EC" id="7.1.1.-" evidence="1"/>
<dbReference type="EMBL" id="AL123456">
    <property type="protein sequence ID" value="CCP45969.1"/>
    <property type="molecule type" value="Genomic_DNA"/>
</dbReference>
<dbReference type="PIR" id="D70946">
    <property type="entry name" value="D70946"/>
</dbReference>
<dbReference type="RefSeq" id="NP_217674.1">
    <property type="nucleotide sequence ID" value="NC_000962.3"/>
</dbReference>
<dbReference type="RefSeq" id="WP_003900644.1">
    <property type="nucleotide sequence ID" value="NZ_NVQJ01000019.1"/>
</dbReference>
<dbReference type="SMR" id="P9WIW9"/>
<dbReference type="FunCoup" id="P9WIW9">
    <property type="interactions" value="103"/>
</dbReference>
<dbReference type="STRING" id="83332.Rv3158"/>
<dbReference type="PaxDb" id="83332-Rv3158"/>
<dbReference type="GeneID" id="45427145"/>
<dbReference type="GeneID" id="888780"/>
<dbReference type="KEGG" id="mtu:Rv3158"/>
<dbReference type="KEGG" id="mtv:RVBD_3158"/>
<dbReference type="TubercuList" id="Rv3158"/>
<dbReference type="eggNOG" id="COG1007">
    <property type="taxonomic scope" value="Bacteria"/>
</dbReference>
<dbReference type="InParanoid" id="P9WIW9"/>
<dbReference type="OrthoDB" id="9811718at2"/>
<dbReference type="PhylomeDB" id="P9WIW9"/>
<dbReference type="Proteomes" id="UP000001584">
    <property type="component" value="Chromosome"/>
</dbReference>
<dbReference type="GO" id="GO:0005576">
    <property type="term" value="C:extracellular region"/>
    <property type="evidence" value="ECO:0007005"/>
    <property type="project" value="MTBBASE"/>
</dbReference>
<dbReference type="GO" id="GO:0005886">
    <property type="term" value="C:plasma membrane"/>
    <property type="evidence" value="ECO:0007005"/>
    <property type="project" value="MTBBASE"/>
</dbReference>
<dbReference type="GO" id="GO:0008137">
    <property type="term" value="F:NADH dehydrogenase (ubiquinone) activity"/>
    <property type="evidence" value="ECO:0007669"/>
    <property type="project" value="InterPro"/>
</dbReference>
<dbReference type="GO" id="GO:0050136">
    <property type="term" value="F:NADH:ubiquinone reductase (non-electrogenic) activity"/>
    <property type="evidence" value="ECO:0007669"/>
    <property type="project" value="UniProtKB-UniRule"/>
</dbReference>
<dbReference type="GO" id="GO:0048038">
    <property type="term" value="F:quinone binding"/>
    <property type="evidence" value="ECO:0007669"/>
    <property type="project" value="UniProtKB-KW"/>
</dbReference>
<dbReference type="GO" id="GO:0042773">
    <property type="term" value="P:ATP synthesis coupled electron transport"/>
    <property type="evidence" value="ECO:0007669"/>
    <property type="project" value="InterPro"/>
</dbReference>
<dbReference type="HAMAP" id="MF_00445">
    <property type="entry name" value="NDH1_NuoN_1"/>
    <property type="match status" value="1"/>
</dbReference>
<dbReference type="InterPro" id="IPR010096">
    <property type="entry name" value="NADH-Q_OxRdtase_suN/2"/>
</dbReference>
<dbReference type="InterPro" id="IPR001750">
    <property type="entry name" value="ND/Mrp_TM"/>
</dbReference>
<dbReference type="NCBIfam" id="TIGR01770">
    <property type="entry name" value="NDH_I_N"/>
    <property type="match status" value="1"/>
</dbReference>
<dbReference type="NCBIfam" id="NF004441">
    <property type="entry name" value="PRK05777.1-4"/>
    <property type="match status" value="1"/>
</dbReference>
<dbReference type="PANTHER" id="PTHR22773">
    <property type="entry name" value="NADH DEHYDROGENASE"/>
    <property type="match status" value="1"/>
</dbReference>
<dbReference type="Pfam" id="PF00361">
    <property type="entry name" value="Proton_antipo_M"/>
    <property type="match status" value="1"/>
</dbReference>
<feature type="chain" id="PRO_0000117693" description="NADH-quinone oxidoreductase subunit N">
    <location>
        <begin position="1"/>
        <end position="531"/>
    </location>
</feature>
<feature type="transmembrane region" description="Helical" evidence="1">
    <location>
        <begin position="8"/>
        <end position="28"/>
    </location>
</feature>
<feature type="transmembrane region" description="Helical" evidence="1">
    <location>
        <begin position="41"/>
        <end position="61"/>
    </location>
</feature>
<feature type="transmembrane region" description="Helical" evidence="1">
    <location>
        <begin position="81"/>
        <end position="101"/>
    </location>
</feature>
<feature type="transmembrane region" description="Helical" evidence="1">
    <location>
        <begin position="146"/>
        <end position="166"/>
    </location>
</feature>
<feature type="transmembrane region" description="Helical" evidence="1">
    <location>
        <begin position="172"/>
        <end position="192"/>
    </location>
</feature>
<feature type="transmembrane region" description="Helical" evidence="1">
    <location>
        <begin position="208"/>
        <end position="228"/>
    </location>
</feature>
<feature type="transmembrane region" description="Helical" evidence="1">
    <location>
        <begin position="250"/>
        <end position="270"/>
    </location>
</feature>
<feature type="transmembrane region" description="Helical" evidence="1">
    <location>
        <begin position="282"/>
        <end position="302"/>
    </location>
</feature>
<feature type="transmembrane region" description="Helical" evidence="1">
    <location>
        <begin position="318"/>
        <end position="338"/>
    </location>
</feature>
<feature type="transmembrane region" description="Helical" evidence="1">
    <location>
        <begin position="350"/>
        <end position="370"/>
    </location>
</feature>
<feature type="transmembrane region" description="Helical" evidence="1">
    <location>
        <begin position="372"/>
        <end position="392"/>
    </location>
</feature>
<feature type="transmembrane region" description="Helical" evidence="1">
    <location>
        <begin position="418"/>
        <end position="438"/>
    </location>
</feature>
<feature type="transmembrane region" description="Helical" evidence="1">
    <location>
        <begin position="453"/>
        <end position="473"/>
    </location>
</feature>
<feature type="transmembrane region" description="Helical" evidence="1">
    <location>
        <begin position="500"/>
        <end position="520"/>
    </location>
</feature>
<protein>
    <recommendedName>
        <fullName evidence="1">NADH-quinone oxidoreductase subunit N</fullName>
        <ecNumber evidence="1">7.1.1.-</ecNumber>
    </recommendedName>
    <alternativeName>
        <fullName evidence="1">NADH dehydrogenase I subunit N</fullName>
    </alternativeName>
    <alternativeName>
        <fullName evidence="1">NDH-1 subunit N</fullName>
    </alternativeName>
</protein>
<sequence length="531" mass="55342">MILPAPHVEYFLLAPMLIVFSVAVAGVLAEAFLPRRWRYGAQVTLALGGSAVALIAVIVVARSIHGSGHAAVLGAIAVDRATLFLQGTVLLVTIMAVVFMAERSARVSPQRQNTLAVARLPGLDSFTPQASAVPGSDAERQAERAGATQTELFPLAMLSVGGMMVFPASNDLLTMFVALEVLSLPLYLMCGLARNRRLLSQEAAMKYFLLGAFSSAFFLYGVALLYGATGTLTLPGIRDALAARTDDSMALAGVALLAVGLLFKVGAVPFHSWIPDVYQGAPTPITGFMAAATKVAAFGALLRVVYVALPPLHDQWRPVLWAIAILTMTVGTVTAVNQTNVKRMLAYSSVAHVGFILTGVIADNPAGLSATLFYLVAYSFSTMGAFAIVGLVRGADGSAGSEDADLSHWAGLGQRSPIVGVMLSMFLLAFAGIPLTSGFVSKFAVFRAAASAGAVPLVIVGVISSGVAAYFYVRVIVSMFFTEESGDTPHVAAPGVLSKAAIAVCTVVTVVLGIAPQPVLDLADQAAQLLR</sequence>
<reference key="1">
    <citation type="journal article" date="1998" name="Nature">
        <title>Deciphering the biology of Mycobacterium tuberculosis from the complete genome sequence.</title>
        <authorList>
            <person name="Cole S.T."/>
            <person name="Brosch R."/>
            <person name="Parkhill J."/>
            <person name="Garnier T."/>
            <person name="Churcher C.M."/>
            <person name="Harris D.E."/>
            <person name="Gordon S.V."/>
            <person name="Eiglmeier K."/>
            <person name="Gas S."/>
            <person name="Barry C.E. III"/>
            <person name="Tekaia F."/>
            <person name="Badcock K."/>
            <person name="Basham D."/>
            <person name="Brown D."/>
            <person name="Chillingworth T."/>
            <person name="Connor R."/>
            <person name="Davies R.M."/>
            <person name="Devlin K."/>
            <person name="Feltwell T."/>
            <person name="Gentles S."/>
            <person name="Hamlin N."/>
            <person name="Holroyd S."/>
            <person name="Hornsby T."/>
            <person name="Jagels K."/>
            <person name="Krogh A."/>
            <person name="McLean J."/>
            <person name="Moule S."/>
            <person name="Murphy L.D."/>
            <person name="Oliver S."/>
            <person name="Osborne J."/>
            <person name="Quail M.A."/>
            <person name="Rajandream M.A."/>
            <person name="Rogers J."/>
            <person name="Rutter S."/>
            <person name="Seeger K."/>
            <person name="Skelton S."/>
            <person name="Squares S."/>
            <person name="Squares R."/>
            <person name="Sulston J.E."/>
            <person name="Taylor K."/>
            <person name="Whitehead S."/>
            <person name="Barrell B.G."/>
        </authorList>
    </citation>
    <scope>NUCLEOTIDE SEQUENCE [LARGE SCALE GENOMIC DNA]</scope>
    <source>
        <strain>ATCC 25618 / H37Rv</strain>
    </source>
</reference>
<reference key="2">
    <citation type="journal article" date="2011" name="Mol. Cell. Proteomics">
        <title>Proteogenomic analysis of Mycobacterium tuberculosis by high resolution mass spectrometry.</title>
        <authorList>
            <person name="Kelkar D.S."/>
            <person name="Kumar D."/>
            <person name="Kumar P."/>
            <person name="Balakrishnan L."/>
            <person name="Muthusamy B."/>
            <person name="Yadav A.K."/>
            <person name="Shrivastava P."/>
            <person name="Marimuthu A."/>
            <person name="Anand S."/>
            <person name="Sundaram H."/>
            <person name="Kingsbury R."/>
            <person name="Harsha H.C."/>
            <person name="Nair B."/>
            <person name="Prasad T.S."/>
            <person name="Chauhan D.S."/>
            <person name="Katoch K."/>
            <person name="Katoch V.M."/>
            <person name="Kumar P."/>
            <person name="Chaerkady R."/>
            <person name="Ramachandran S."/>
            <person name="Dash D."/>
            <person name="Pandey A."/>
        </authorList>
    </citation>
    <scope>IDENTIFICATION BY MASS SPECTROMETRY [LARGE SCALE ANALYSIS]</scope>
    <source>
        <strain>ATCC 25618 / H37Rv</strain>
    </source>
</reference>
<organism>
    <name type="scientific">Mycobacterium tuberculosis (strain ATCC 25618 / H37Rv)</name>
    <dbReference type="NCBI Taxonomy" id="83332"/>
    <lineage>
        <taxon>Bacteria</taxon>
        <taxon>Bacillati</taxon>
        <taxon>Actinomycetota</taxon>
        <taxon>Actinomycetes</taxon>
        <taxon>Mycobacteriales</taxon>
        <taxon>Mycobacteriaceae</taxon>
        <taxon>Mycobacterium</taxon>
        <taxon>Mycobacterium tuberculosis complex</taxon>
    </lineage>
</organism>
<evidence type="ECO:0000255" key="1">
    <source>
        <dbReference type="HAMAP-Rule" id="MF_00445"/>
    </source>
</evidence>
<name>NUON_MYCTU</name>